<feature type="chain" id="PRO_0000161839" description="Multidrug resistance protein MdtC">
    <location>
        <begin position="1"/>
        <end position="1024"/>
    </location>
</feature>
<feature type="transmembrane region" description="Helical" evidence="1">
    <location>
        <begin position="12"/>
        <end position="34"/>
    </location>
</feature>
<feature type="transmembrane region" description="Helical" evidence="1">
    <location>
        <begin position="336"/>
        <end position="353"/>
    </location>
</feature>
<feature type="transmembrane region" description="Helical" evidence="1">
    <location>
        <begin position="360"/>
        <end position="379"/>
    </location>
</feature>
<feature type="transmembrane region" description="Helical" evidence="1">
    <location>
        <begin position="389"/>
        <end position="411"/>
    </location>
</feature>
<feature type="transmembrane region" description="Helical" evidence="1">
    <location>
        <begin position="431"/>
        <end position="453"/>
    </location>
</feature>
<feature type="transmembrane region" description="Helical" evidence="1">
    <location>
        <begin position="468"/>
        <end position="490"/>
    </location>
</feature>
<feature type="transmembrane region" description="Helical" evidence="1">
    <location>
        <begin position="853"/>
        <end position="875"/>
    </location>
</feature>
<feature type="transmembrane region" description="Helical" evidence="1">
    <location>
        <begin position="895"/>
        <end position="917"/>
    </location>
</feature>
<feature type="transmembrane region" description="Helical" evidence="1">
    <location>
        <begin position="948"/>
        <end position="970"/>
    </location>
</feature>
<feature type="transmembrane region" description="Helical" evidence="1">
    <location>
        <begin position="985"/>
        <end position="1007"/>
    </location>
</feature>
<comment type="subunit">
    <text evidence="1">Part of a tripartite efflux system composed of MdtA, MdtB and MdtC. MdtC forms a heteromultimer with MdtB.</text>
</comment>
<comment type="subcellular location">
    <subcellularLocation>
        <location evidence="1">Cell inner membrane</location>
        <topology evidence="1">Multi-pass membrane protein</topology>
    </subcellularLocation>
</comment>
<comment type="similarity">
    <text evidence="1">Belongs to the resistance-nodulation-cell division (RND) (TC 2.A.6) family. MdtC subfamily.</text>
</comment>
<proteinExistence type="inferred from homology"/>
<keyword id="KW-0997">Cell inner membrane</keyword>
<keyword id="KW-1003">Cell membrane</keyword>
<keyword id="KW-0472">Membrane</keyword>
<keyword id="KW-1185">Reference proteome</keyword>
<keyword id="KW-0812">Transmembrane</keyword>
<keyword id="KW-1133">Transmembrane helix</keyword>
<keyword id="KW-0813">Transport</keyword>
<accession>Q8ZCV9</accession>
<accession>Q0WD51</accession>
<accession>Q74SA6</accession>
<accession>Q7CJL0</accession>
<organism>
    <name type="scientific">Yersinia pestis</name>
    <dbReference type="NCBI Taxonomy" id="632"/>
    <lineage>
        <taxon>Bacteria</taxon>
        <taxon>Pseudomonadati</taxon>
        <taxon>Pseudomonadota</taxon>
        <taxon>Gammaproteobacteria</taxon>
        <taxon>Enterobacterales</taxon>
        <taxon>Yersiniaceae</taxon>
        <taxon>Yersinia</taxon>
    </lineage>
</organism>
<dbReference type="EMBL" id="AL590842">
    <property type="protein sequence ID" value="CAL21461.1"/>
    <property type="molecule type" value="Genomic_DNA"/>
</dbReference>
<dbReference type="EMBL" id="AE009952">
    <property type="protein sequence ID" value="AAM84956.1"/>
    <property type="molecule type" value="Genomic_DNA"/>
</dbReference>
<dbReference type="EMBL" id="AE017042">
    <property type="protein sequence ID" value="AAS62905.1"/>
    <property type="molecule type" value="Genomic_DNA"/>
</dbReference>
<dbReference type="PIR" id="AB0347">
    <property type="entry name" value="AB0347"/>
</dbReference>
<dbReference type="RefSeq" id="WP_002209794.1">
    <property type="nucleotide sequence ID" value="NZ_WUCM01000037.1"/>
</dbReference>
<dbReference type="RefSeq" id="YP_002347787.1">
    <property type="nucleotide sequence ID" value="NC_003143.1"/>
</dbReference>
<dbReference type="SMR" id="Q8ZCV9"/>
<dbReference type="IntAct" id="Q8ZCV9">
    <property type="interactions" value="4"/>
</dbReference>
<dbReference type="STRING" id="214092.YPO2849"/>
<dbReference type="PaxDb" id="214092-YPO2849"/>
<dbReference type="DNASU" id="1146331"/>
<dbReference type="EnsemblBacteria" id="AAS62905">
    <property type="protein sequence ID" value="AAS62905"/>
    <property type="gene ID" value="YP_2716"/>
</dbReference>
<dbReference type="GeneID" id="57975807"/>
<dbReference type="KEGG" id="ype:YPO2849"/>
<dbReference type="KEGG" id="ypk:y1384"/>
<dbReference type="KEGG" id="ypm:YP_2716"/>
<dbReference type="PATRIC" id="fig|1028802.3.peg.1514"/>
<dbReference type="eggNOG" id="COG0841">
    <property type="taxonomic scope" value="Bacteria"/>
</dbReference>
<dbReference type="HOGENOM" id="CLU_002755_1_2_6"/>
<dbReference type="OMA" id="LEPFIIM"/>
<dbReference type="OrthoDB" id="9757904at2"/>
<dbReference type="Proteomes" id="UP000000815">
    <property type="component" value="Chromosome"/>
</dbReference>
<dbReference type="Proteomes" id="UP000001019">
    <property type="component" value="Chromosome"/>
</dbReference>
<dbReference type="Proteomes" id="UP000002490">
    <property type="component" value="Chromosome"/>
</dbReference>
<dbReference type="GO" id="GO:0005886">
    <property type="term" value="C:plasma membrane"/>
    <property type="evidence" value="ECO:0000318"/>
    <property type="project" value="GO_Central"/>
</dbReference>
<dbReference type="GO" id="GO:0042910">
    <property type="term" value="F:xenobiotic transmembrane transporter activity"/>
    <property type="evidence" value="ECO:0000318"/>
    <property type="project" value="GO_Central"/>
</dbReference>
<dbReference type="FunFam" id="1.20.1640.10:FF:000001">
    <property type="entry name" value="Efflux pump membrane transporter"/>
    <property type="match status" value="1"/>
</dbReference>
<dbReference type="FunFam" id="3.30.70.1430:FF:000001">
    <property type="entry name" value="Efflux pump membrane transporter"/>
    <property type="match status" value="1"/>
</dbReference>
<dbReference type="FunFam" id="3.30.2090.10:FF:000004">
    <property type="entry name" value="Multidrug resistance protein MdtC"/>
    <property type="match status" value="1"/>
</dbReference>
<dbReference type="Gene3D" id="3.30.70.1430">
    <property type="entry name" value="Multidrug efflux transporter AcrB pore domain"/>
    <property type="match status" value="2"/>
</dbReference>
<dbReference type="Gene3D" id="3.30.70.1440">
    <property type="entry name" value="Multidrug efflux transporter AcrB pore domain"/>
    <property type="match status" value="1"/>
</dbReference>
<dbReference type="Gene3D" id="3.30.70.1320">
    <property type="entry name" value="Multidrug efflux transporter AcrB pore domain like"/>
    <property type="match status" value="1"/>
</dbReference>
<dbReference type="Gene3D" id="3.30.2090.10">
    <property type="entry name" value="Multidrug efflux transporter AcrB TolC docking domain, DN and DC subdomains"/>
    <property type="match status" value="2"/>
</dbReference>
<dbReference type="Gene3D" id="1.20.1640.10">
    <property type="entry name" value="Multidrug efflux transporter AcrB transmembrane domain"/>
    <property type="match status" value="2"/>
</dbReference>
<dbReference type="HAMAP" id="MF_01424">
    <property type="entry name" value="MdtC"/>
    <property type="match status" value="1"/>
</dbReference>
<dbReference type="InterPro" id="IPR027463">
    <property type="entry name" value="AcrB_DN_DC_subdom"/>
</dbReference>
<dbReference type="InterPro" id="IPR001036">
    <property type="entry name" value="Acrflvin-R"/>
</dbReference>
<dbReference type="InterPro" id="IPR023931">
    <property type="entry name" value="Multidrug-R_MdtC"/>
</dbReference>
<dbReference type="NCBIfam" id="NF007905">
    <property type="entry name" value="PRK10614.1"/>
    <property type="match status" value="1"/>
</dbReference>
<dbReference type="NCBIfam" id="NF033617">
    <property type="entry name" value="RND_permease_2"/>
    <property type="match status" value="1"/>
</dbReference>
<dbReference type="PANTHER" id="PTHR32063">
    <property type="match status" value="1"/>
</dbReference>
<dbReference type="PANTHER" id="PTHR32063:SF34">
    <property type="entry name" value="MULTIDRUG RESISTANCE PROTEIN MDTC"/>
    <property type="match status" value="1"/>
</dbReference>
<dbReference type="Pfam" id="PF00873">
    <property type="entry name" value="ACR_tran"/>
    <property type="match status" value="1"/>
</dbReference>
<dbReference type="PRINTS" id="PR00702">
    <property type="entry name" value="ACRIFLAVINRP"/>
</dbReference>
<dbReference type="SUPFAM" id="SSF82693">
    <property type="entry name" value="Multidrug efflux transporter AcrB pore domain, PN1, PN2, PC1 and PC2 subdomains"/>
    <property type="match status" value="4"/>
</dbReference>
<dbReference type="SUPFAM" id="SSF82714">
    <property type="entry name" value="Multidrug efflux transporter AcrB TolC docking domain, DN and DC subdomains"/>
    <property type="match status" value="2"/>
</dbReference>
<dbReference type="SUPFAM" id="SSF82866">
    <property type="entry name" value="Multidrug efflux transporter AcrB transmembrane domain"/>
    <property type="match status" value="2"/>
</dbReference>
<reference key="1">
    <citation type="journal article" date="2001" name="Nature">
        <title>Genome sequence of Yersinia pestis, the causative agent of plague.</title>
        <authorList>
            <person name="Parkhill J."/>
            <person name="Wren B.W."/>
            <person name="Thomson N.R."/>
            <person name="Titball R.W."/>
            <person name="Holden M.T.G."/>
            <person name="Prentice M.B."/>
            <person name="Sebaihia M."/>
            <person name="James K.D."/>
            <person name="Churcher C.M."/>
            <person name="Mungall K.L."/>
            <person name="Baker S."/>
            <person name="Basham D."/>
            <person name="Bentley S.D."/>
            <person name="Brooks K."/>
            <person name="Cerdeno-Tarraga A.-M."/>
            <person name="Chillingworth T."/>
            <person name="Cronin A."/>
            <person name="Davies R.M."/>
            <person name="Davis P."/>
            <person name="Dougan G."/>
            <person name="Feltwell T."/>
            <person name="Hamlin N."/>
            <person name="Holroyd S."/>
            <person name="Jagels K."/>
            <person name="Karlyshev A.V."/>
            <person name="Leather S."/>
            <person name="Moule S."/>
            <person name="Oyston P.C.F."/>
            <person name="Quail M.A."/>
            <person name="Rutherford K.M."/>
            <person name="Simmonds M."/>
            <person name="Skelton J."/>
            <person name="Stevens K."/>
            <person name="Whitehead S."/>
            <person name="Barrell B.G."/>
        </authorList>
    </citation>
    <scope>NUCLEOTIDE SEQUENCE [LARGE SCALE GENOMIC DNA]</scope>
    <source>
        <strain>CO-92 / Biovar Orientalis</strain>
    </source>
</reference>
<reference key="2">
    <citation type="journal article" date="2002" name="J. Bacteriol.">
        <title>Genome sequence of Yersinia pestis KIM.</title>
        <authorList>
            <person name="Deng W."/>
            <person name="Burland V."/>
            <person name="Plunkett G. III"/>
            <person name="Boutin A."/>
            <person name="Mayhew G.F."/>
            <person name="Liss P."/>
            <person name="Perna N.T."/>
            <person name="Rose D.J."/>
            <person name="Mau B."/>
            <person name="Zhou S."/>
            <person name="Schwartz D.C."/>
            <person name="Fetherston J.D."/>
            <person name="Lindler L.E."/>
            <person name="Brubaker R.R."/>
            <person name="Plano G.V."/>
            <person name="Straley S.C."/>
            <person name="McDonough K.A."/>
            <person name="Nilles M.L."/>
            <person name="Matson J.S."/>
            <person name="Blattner F.R."/>
            <person name="Perry R.D."/>
        </authorList>
    </citation>
    <scope>NUCLEOTIDE SEQUENCE [LARGE SCALE GENOMIC DNA]</scope>
    <source>
        <strain>KIM10+ / Biovar Mediaevalis</strain>
    </source>
</reference>
<reference key="3">
    <citation type="journal article" date="2004" name="DNA Res.">
        <title>Complete genome sequence of Yersinia pestis strain 91001, an isolate avirulent to humans.</title>
        <authorList>
            <person name="Song Y."/>
            <person name="Tong Z."/>
            <person name="Wang J."/>
            <person name="Wang L."/>
            <person name="Guo Z."/>
            <person name="Han Y."/>
            <person name="Zhang J."/>
            <person name="Pei D."/>
            <person name="Zhou D."/>
            <person name="Qin H."/>
            <person name="Pang X."/>
            <person name="Han Y."/>
            <person name="Zhai J."/>
            <person name="Li M."/>
            <person name="Cui B."/>
            <person name="Qi Z."/>
            <person name="Jin L."/>
            <person name="Dai R."/>
            <person name="Chen F."/>
            <person name="Li S."/>
            <person name="Ye C."/>
            <person name="Du Z."/>
            <person name="Lin W."/>
            <person name="Wang J."/>
            <person name="Yu J."/>
            <person name="Yang H."/>
            <person name="Wang J."/>
            <person name="Huang P."/>
            <person name="Yang R."/>
        </authorList>
    </citation>
    <scope>NUCLEOTIDE SEQUENCE [LARGE SCALE GENOMIC DNA]</scope>
    <source>
        <strain>91001 / Biovar Mediaevalis</strain>
    </source>
</reference>
<name>MDTC_YERPE</name>
<protein>
    <recommendedName>
        <fullName evidence="1">Multidrug resistance protein MdtC</fullName>
    </recommendedName>
    <alternativeName>
        <fullName evidence="1">Multidrug transporter MdtC</fullName>
    </alternativeName>
</protein>
<sequence>MKFFALFIQRPVATTLLTLAITLSGIIGFSLLPVSPLPQVDYPVIMVSASMPGADPETMASSVATPLERALGRIAGVNEMTSTSSLGSTRIILQFDLNRDINGAARDVQAALNAAQSLLPSGMPSRPTYRKMNPSDAPIMIMTLTSDTFSQGQLYDYASTKLAQKIAQTEGVSDVTVGGSSLPAVRVELNPSALFNQGVSLDAVRQAISAANVRRPQGSVDAAETHWQVQANDEIKTAEGYRPLIVHYNNGSPVRLQDVANVIDSVQDVRNAGMSAGQPAVLLVISREPGANIIATVDRIRAELPALRASIPASIQLNIAQDRSPTIRASLDEVERSLVIAVALVILVVFIFLRSGRATLIPAVAVPVSLIGTFAAMYLCGFSLNNLSLMALTIATGFVVDDAIVVLENISRHLEAGVKPKVAALRGVREVGFTVLSMSISLVAVFIPLLLMAGLPGRLFREFAVTLSVAIGISLVISLTLTPMMCAWLLRSHPKGQQQRIRGFGKVLLAIQQGYGRSLNWALSHTRWVMVVLLSTIALNVWLYISIPKTFFPEQDTGRMMGFIQADQSISFQSMQQKLKDFMQIVGADPAVDSVTGFTGGSRTNSGSMFISLKPLSERQETAQQVITRLRGKLAKEPGANLFLSSVQDIRVGGRHSNAAYQFTLLADDLAALREWEPKVRAALAKLPQLADVNSDQQDKGAEMALTYDRETMARLGIDVSEANALLNNAFGQRQISTIYQPLNQYKVVMEVAPEYTQDVSSLDKMFVINSNGQSIPLSYFAKWQPANAPLAVNHQGLSAASTISFNLPDGGSLSEATAAVERAMTELGVPSTVRGAFAGTAQVFQETLKSQLWLIMAAIATVYIVLGILYESYVHPLTILSTLPSAGVGALLALELFDAPFSLIALIGIMLLIGIVKKNAIMMVDFALDAQRNGNISAREAIFQASLLRFRPIIMTTLAALFGALPLVLSSGDGAELRQPLGITIVGGLVVSQLLTLYTTPVIYLYFDRLRNRFSKQPLMKLE</sequence>
<evidence type="ECO:0000255" key="1">
    <source>
        <dbReference type="HAMAP-Rule" id="MF_01424"/>
    </source>
</evidence>
<gene>
    <name evidence="1" type="primary">mdtC</name>
    <name type="ordered locus">YPO2849</name>
    <name type="ordered locus">y1384</name>
    <name type="ordered locus">YP_2716</name>
</gene>